<dbReference type="EMBL" id="AF358910">
    <property type="protein sequence ID" value="AAK49533.1"/>
    <property type="molecule type" value="mRNA"/>
</dbReference>
<dbReference type="EMBL" id="AF339912">
    <property type="protein sequence ID" value="AAK28551.1"/>
    <property type="status" value="ALT_FRAME"/>
    <property type="molecule type" value="mRNA"/>
</dbReference>
<dbReference type="EMBL" id="AY358853">
    <property type="protein sequence ID" value="AAQ89212.1"/>
    <property type="molecule type" value="mRNA"/>
</dbReference>
<dbReference type="EMBL" id="AL136087">
    <property type="status" value="NOT_ANNOTATED_CDS"/>
    <property type="molecule type" value="Genomic_DNA"/>
</dbReference>
<dbReference type="EMBL" id="BC025726">
    <property type="protein sequence ID" value="AAH25726.1"/>
    <property type="molecule type" value="mRNA"/>
</dbReference>
<dbReference type="CCDS" id="CCDS47419.1">
    <molecule id="Q96T54-4"/>
</dbReference>
<dbReference type="CCDS" id="CCDS4842.1">
    <molecule id="Q96T54-3"/>
</dbReference>
<dbReference type="RefSeq" id="NP_001128583.1">
    <molecule id="Q96T54-4"/>
    <property type="nucleotide sequence ID" value="NM_001135111.2"/>
</dbReference>
<dbReference type="RefSeq" id="NP_113648.2">
    <molecule id="Q96T54-3"/>
    <property type="nucleotide sequence ID" value="NM_031460.3"/>
</dbReference>
<dbReference type="SMR" id="Q96T54"/>
<dbReference type="BioGRID" id="124608">
    <property type="interactions" value="1"/>
</dbReference>
<dbReference type="FunCoup" id="Q96T54">
    <property type="interactions" value="51"/>
</dbReference>
<dbReference type="STRING" id="9606.ENSP00000362328"/>
<dbReference type="BindingDB" id="Q96T54"/>
<dbReference type="ChEMBL" id="CHEMBL4523433"/>
<dbReference type="TCDB" id="1.A.1.9.6">
    <property type="family name" value="the voltage-gated ion channel (vic) superfamily"/>
</dbReference>
<dbReference type="GlyCosmos" id="Q96T54">
    <property type="glycosylation" value="2 sites, No reported glycans"/>
</dbReference>
<dbReference type="GlyGen" id="Q96T54">
    <property type="glycosylation" value="2 sites"/>
</dbReference>
<dbReference type="BioMuta" id="KCNK17"/>
<dbReference type="DMDM" id="24636280"/>
<dbReference type="jPOST" id="Q96T54"/>
<dbReference type="PaxDb" id="9606-ENSP00000362328"/>
<dbReference type="PeptideAtlas" id="Q96T54"/>
<dbReference type="Antibodypedia" id="45856">
    <property type="antibodies" value="60 antibodies from 19 providers"/>
</dbReference>
<dbReference type="DNASU" id="89822"/>
<dbReference type="Ensembl" id="ENST00000373231.9">
    <molecule id="Q96T54-3"/>
    <property type="protein sequence ID" value="ENSP00000362328.4"/>
    <property type="gene ID" value="ENSG00000124780.14"/>
</dbReference>
<dbReference type="Ensembl" id="ENST00000453413.2">
    <molecule id="Q96T54-4"/>
    <property type="protein sequence ID" value="ENSP00000401271.2"/>
    <property type="gene ID" value="ENSG00000124780.14"/>
</dbReference>
<dbReference type="GeneID" id="89822"/>
<dbReference type="KEGG" id="hsa:89822"/>
<dbReference type="MANE-Select" id="ENST00000373231.9">
    <property type="protein sequence ID" value="ENSP00000362328.4"/>
    <property type="RefSeq nucleotide sequence ID" value="NM_031460.4"/>
    <property type="RefSeq protein sequence ID" value="NP_113648.2"/>
</dbReference>
<dbReference type="UCSC" id="uc003ooo.4">
    <molecule id="Q96T54-3"/>
    <property type="organism name" value="human"/>
</dbReference>
<dbReference type="AGR" id="HGNC:14465"/>
<dbReference type="CTD" id="89822"/>
<dbReference type="DisGeNET" id="89822"/>
<dbReference type="GeneCards" id="KCNK17"/>
<dbReference type="HGNC" id="HGNC:14465">
    <property type="gene designation" value="KCNK17"/>
</dbReference>
<dbReference type="HPA" id="ENSG00000124780">
    <property type="expression patterns" value="Tissue enhanced (lung, thyroid gland)"/>
</dbReference>
<dbReference type="MIM" id="607370">
    <property type="type" value="gene"/>
</dbReference>
<dbReference type="neXtProt" id="NX_Q96T54"/>
<dbReference type="OpenTargets" id="ENSG00000124780"/>
<dbReference type="PharmGKB" id="PA30058"/>
<dbReference type="VEuPathDB" id="HostDB:ENSG00000124780"/>
<dbReference type="eggNOG" id="KOG1418">
    <property type="taxonomic scope" value="Eukaryota"/>
</dbReference>
<dbReference type="GeneTree" id="ENSGT00940000162681"/>
<dbReference type="HOGENOM" id="CLU_022504_1_0_1"/>
<dbReference type="InParanoid" id="Q96T54"/>
<dbReference type="OMA" id="FQREKWA"/>
<dbReference type="OrthoDB" id="297496at2759"/>
<dbReference type="PAN-GO" id="Q96T54">
    <property type="GO annotations" value="5 GO annotations based on evolutionary models"/>
</dbReference>
<dbReference type="PhylomeDB" id="Q96T54"/>
<dbReference type="TreeFam" id="TF313947"/>
<dbReference type="PathwayCommons" id="Q96T54"/>
<dbReference type="Reactome" id="R-HSA-1299361">
    <property type="pathway name" value="TWIK-related alkaline pH activated K+ channel (TALK)"/>
</dbReference>
<dbReference type="Reactome" id="R-HSA-5576886">
    <property type="pathway name" value="Phase 4 - resting membrane potential"/>
</dbReference>
<dbReference type="BioGRID-ORCS" id="89822">
    <property type="hits" value="12 hits in 1140 CRISPR screens"/>
</dbReference>
<dbReference type="ChiTaRS" id="KCNK17">
    <property type="organism name" value="human"/>
</dbReference>
<dbReference type="GeneWiki" id="KCNK17"/>
<dbReference type="GenomeRNAi" id="89822"/>
<dbReference type="Pharos" id="Q96T54">
    <property type="development level" value="Tchem"/>
</dbReference>
<dbReference type="PRO" id="PR:Q96T54"/>
<dbReference type="Proteomes" id="UP000005640">
    <property type="component" value="Chromosome 6"/>
</dbReference>
<dbReference type="RNAct" id="Q96T54">
    <property type="molecule type" value="protein"/>
</dbReference>
<dbReference type="Bgee" id="ENSG00000124780">
    <property type="expression patterns" value="Expressed in ascending aorta and 97 other cell types or tissues"/>
</dbReference>
<dbReference type="GO" id="GO:0034702">
    <property type="term" value="C:monoatomic ion channel complex"/>
    <property type="evidence" value="ECO:0007669"/>
    <property type="project" value="UniProtKB-KW"/>
</dbReference>
<dbReference type="GO" id="GO:0005886">
    <property type="term" value="C:plasma membrane"/>
    <property type="evidence" value="ECO:0000318"/>
    <property type="project" value="GO_Central"/>
</dbReference>
<dbReference type="GO" id="GO:0046872">
    <property type="term" value="F:metal ion binding"/>
    <property type="evidence" value="ECO:0007669"/>
    <property type="project" value="UniProtKB-KW"/>
</dbReference>
<dbReference type="GO" id="GO:0015271">
    <property type="term" value="F:outward rectifier potassium channel activity"/>
    <property type="evidence" value="ECO:0000314"/>
    <property type="project" value="UniProtKB"/>
</dbReference>
<dbReference type="GO" id="GO:0005267">
    <property type="term" value="F:potassium channel activity"/>
    <property type="evidence" value="ECO:0000314"/>
    <property type="project" value="UniProtKB"/>
</dbReference>
<dbReference type="GO" id="GO:0022841">
    <property type="term" value="F:potassium ion leak channel activity"/>
    <property type="evidence" value="ECO:0000318"/>
    <property type="project" value="GO_Central"/>
</dbReference>
<dbReference type="GO" id="GO:0046982">
    <property type="term" value="F:protein heterodimerization activity"/>
    <property type="evidence" value="ECO:0000314"/>
    <property type="project" value="UniProtKB"/>
</dbReference>
<dbReference type="GO" id="GO:0071805">
    <property type="term" value="P:potassium ion transmembrane transport"/>
    <property type="evidence" value="ECO:0000318"/>
    <property type="project" value="GO_Central"/>
</dbReference>
<dbReference type="GO" id="GO:0006813">
    <property type="term" value="P:potassium ion transport"/>
    <property type="evidence" value="ECO:0000314"/>
    <property type="project" value="UniProtKB"/>
</dbReference>
<dbReference type="FunFam" id="1.10.287.70:FF:000110">
    <property type="entry name" value="Potassium channel subfamily K member"/>
    <property type="match status" value="1"/>
</dbReference>
<dbReference type="Gene3D" id="1.10.287.70">
    <property type="match status" value="1"/>
</dbReference>
<dbReference type="InterPro" id="IPR003280">
    <property type="entry name" value="2pore_dom_K_chnl"/>
</dbReference>
<dbReference type="InterPro" id="IPR003092">
    <property type="entry name" value="2pore_dom_K_chnl_TASK"/>
</dbReference>
<dbReference type="InterPro" id="IPR013099">
    <property type="entry name" value="K_chnl_dom"/>
</dbReference>
<dbReference type="PANTHER" id="PTHR11003:SF340">
    <property type="entry name" value="POTASSIUM CHANNEL SUBFAMILY K MEMBER 17"/>
    <property type="match status" value="1"/>
</dbReference>
<dbReference type="PANTHER" id="PTHR11003">
    <property type="entry name" value="POTASSIUM CHANNEL, SUBFAMILY K"/>
    <property type="match status" value="1"/>
</dbReference>
<dbReference type="Pfam" id="PF07885">
    <property type="entry name" value="Ion_trans_2"/>
    <property type="match status" value="2"/>
</dbReference>
<dbReference type="PIRSF" id="PIRSF038061">
    <property type="entry name" value="K_channel_subfamily_K_type"/>
    <property type="match status" value="1"/>
</dbReference>
<dbReference type="PRINTS" id="PR01333">
    <property type="entry name" value="2POREKCHANEL"/>
</dbReference>
<dbReference type="PRINTS" id="PR01095">
    <property type="entry name" value="TASKCHANNEL"/>
</dbReference>
<dbReference type="SUPFAM" id="SSF81324">
    <property type="entry name" value="Voltage-gated potassium channels"/>
    <property type="match status" value="2"/>
</dbReference>
<keyword id="KW-0025">Alternative splicing</keyword>
<keyword id="KW-1003">Cell membrane</keyword>
<keyword id="KW-1015">Disulfide bond</keyword>
<keyword id="KW-0325">Glycoprotein</keyword>
<keyword id="KW-0407">Ion channel</keyword>
<keyword id="KW-0406">Ion transport</keyword>
<keyword id="KW-0472">Membrane</keyword>
<keyword id="KW-0479">Metal-binding</keyword>
<keyword id="KW-0630">Potassium</keyword>
<keyword id="KW-0631">Potassium channel</keyword>
<keyword id="KW-0633">Potassium transport</keyword>
<keyword id="KW-1267">Proteomics identification</keyword>
<keyword id="KW-1185">Reference proteome</keyword>
<keyword id="KW-0812">Transmembrane</keyword>
<keyword id="KW-1133">Transmembrane helix</keyword>
<keyword id="KW-0813">Transport</keyword>
<keyword id="KW-0851">Voltage-gated channel</keyword>
<reference key="1">
    <citation type="journal article" date="2001" name="Biochem. Biophys. Res. Commun.">
        <title>Genomic and functional characteristics of novel human pancreatic 2P domain K(+) channels.</title>
        <authorList>
            <person name="Girard C."/>
            <person name="Duprat F."/>
            <person name="Terrenoire C."/>
            <person name="Tinel N."/>
            <person name="Fosset M."/>
            <person name="Romey G."/>
            <person name="Lazdunski M."/>
            <person name="Lesage F."/>
        </authorList>
    </citation>
    <scope>NUCLEOTIDE SEQUENCE [MRNA]</scope>
    <scope>FUNCTION</scope>
    <scope>TRANSPORTER ACTIVITY</scope>
    <scope>ACTIVITY REGULATION</scope>
    <scope>TISSUE SPECIFICITY</scope>
    <source>
        <tissue>Pancreas</tissue>
    </source>
</reference>
<reference key="2">
    <citation type="journal article" date="2001" name="FEBS Lett.">
        <title>Characterization of TASK-4, a novel member of the pH-sensitive, two-pore domain potassium channel family.</title>
        <authorList>
            <person name="Decher N."/>
            <person name="Maier M."/>
            <person name="Dittrich W."/>
            <person name="Gassenhuber J."/>
            <person name="Brueggemann A."/>
            <person name="Busch A.E."/>
            <person name="Steinmeyer K."/>
        </authorList>
    </citation>
    <scope>NUCLEOTIDE SEQUENCE [MRNA]</scope>
    <scope>FUNCTION</scope>
    <scope>TRANSPORTER ACTIVITY</scope>
    <scope>ACTIVITY REGULATION</scope>
    <scope>BIOPHYSICOCHEMICAL PROPERTIES</scope>
    <scope>VARIANT GLY-21</scope>
    <source>
        <tissue>Adrenal gland</tissue>
    </source>
</reference>
<reference key="3">
    <citation type="journal article" date="2003" name="Genome Res.">
        <title>The secreted protein discovery initiative (SPDI), a large-scale effort to identify novel human secreted and transmembrane proteins: a bioinformatics assessment.</title>
        <authorList>
            <person name="Clark H.F."/>
            <person name="Gurney A.L."/>
            <person name="Abaya E."/>
            <person name="Baker K."/>
            <person name="Baldwin D.T."/>
            <person name="Brush J."/>
            <person name="Chen J."/>
            <person name="Chow B."/>
            <person name="Chui C."/>
            <person name="Crowley C."/>
            <person name="Currell B."/>
            <person name="Deuel B."/>
            <person name="Dowd P."/>
            <person name="Eaton D."/>
            <person name="Foster J.S."/>
            <person name="Grimaldi C."/>
            <person name="Gu Q."/>
            <person name="Hass P.E."/>
            <person name="Heldens S."/>
            <person name="Huang A."/>
            <person name="Kim H.S."/>
            <person name="Klimowski L."/>
            <person name="Jin Y."/>
            <person name="Johnson S."/>
            <person name="Lee J."/>
            <person name="Lewis L."/>
            <person name="Liao D."/>
            <person name="Mark M.R."/>
            <person name="Robbie E."/>
            <person name="Sanchez C."/>
            <person name="Schoenfeld J."/>
            <person name="Seshagiri S."/>
            <person name="Simmons L."/>
            <person name="Singh J."/>
            <person name="Smith V."/>
            <person name="Stinson J."/>
            <person name="Vagts A."/>
            <person name="Vandlen R.L."/>
            <person name="Watanabe C."/>
            <person name="Wieand D."/>
            <person name="Woods K."/>
            <person name="Xie M.-H."/>
            <person name="Yansura D.G."/>
            <person name="Yi S."/>
            <person name="Yu G."/>
            <person name="Yuan J."/>
            <person name="Zhang M."/>
            <person name="Zhang Z."/>
            <person name="Goddard A.D."/>
            <person name="Wood W.I."/>
            <person name="Godowski P.J."/>
            <person name="Gray A.M."/>
        </authorList>
    </citation>
    <scope>NUCLEOTIDE SEQUENCE [LARGE SCALE MRNA]</scope>
</reference>
<reference key="4">
    <citation type="journal article" date="2003" name="Nature">
        <title>The DNA sequence and analysis of human chromosome 6.</title>
        <authorList>
            <person name="Mungall A.J."/>
            <person name="Palmer S.A."/>
            <person name="Sims S.K."/>
            <person name="Edwards C.A."/>
            <person name="Ashurst J.L."/>
            <person name="Wilming L."/>
            <person name="Jones M.C."/>
            <person name="Horton R."/>
            <person name="Hunt S.E."/>
            <person name="Scott C.E."/>
            <person name="Gilbert J.G.R."/>
            <person name="Clamp M.E."/>
            <person name="Bethel G."/>
            <person name="Milne S."/>
            <person name="Ainscough R."/>
            <person name="Almeida J.P."/>
            <person name="Ambrose K.D."/>
            <person name="Andrews T.D."/>
            <person name="Ashwell R.I.S."/>
            <person name="Babbage A.K."/>
            <person name="Bagguley C.L."/>
            <person name="Bailey J."/>
            <person name="Banerjee R."/>
            <person name="Barker D.J."/>
            <person name="Barlow K.F."/>
            <person name="Bates K."/>
            <person name="Beare D.M."/>
            <person name="Beasley H."/>
            <person name="Beasley O."/>
            <person name="Bird C.P."/>
            <person name="Blakey S.E."/>
            <person name="Bray-Allen S."/>
            <person name="Brook J."/>
            <person name="Brown A.J."/>
            <person name="Brown J.Y."/>
            <person name="Burford D.C."/>
            <person name="Burrill W."/>
            <person name="Burton J."/>
            <person name="Carder C."/>
            <person name="Carter N.P."/>
            <person name="Chapman J.C."/>
            <person name="Clark S.Y."/>
            <person name="Clark G."/>
            <person name="Clee C.M."/>
            <person name="Clegg S."/>
            <person name="Cobley V."/>
            <person name="Collier R.E."/>
            <person name="Collins J.E."/>
            <person name="Colman L.K."/>
            <person name="Corby N.R."/>
            <person name="Coville G.J."/>
            <person name="Culley K.M."/>
            <person name="Dhami P."/>
            <person name="Davies J."/>
            <person name="Dunn M."/>
            <person name="Earthrowl M.E."/>
            <person name="Ellington A.E."/>
            <person name="Evans K.A."/>
            <person name="Faulkner L."/>
            <person name="Francis M.D."/>
            <person name="Frankish A."/>
            <person name="Frankland J."/>
            <person name="French L."/>
            <person name="Garner P."/>
            <person name="Garnett J."/>
            <person name="Ghori M.J."/>
            <person name="Gilby L.M."/>
            <person name="Gillson C.J."/>
            <person name="Glithero R.J."/>
            <person name="Grafham D.V."/>
            <person name="Grant M."/>
            <person name="Gribble S."/>
            <person name="Griffiths C."/>
            <person name="Griffiths M.N.D."/>
            <person name="Hall R."/>
            <person name="Halls K.S."/>
            <person name="Hammond S."/>
            <person name="Harley J.L."/>
            <person name="Hart E.A."/>
            <person name="Heath P.D."/>
            <person name="Heathcott R."/>
            <person name="Holmes S.J."/>
            <person name="Howden P.J."/>
            <person name="Howe K.L."/>
            <person name="Howell G.R."/>
            <person name="Huckle E."/>
            <person name="Humphray S.J."/>
            <person name="Humphries M.D."/>
            <person name="Hunt A.R."/>
            <person name="Johnson C.M."/>
            <person name="Joy A.A."/>
            <person name="Kay M."/>
            <person name="Keenan S.J."/>
            <person name="Kimberley A.M."/>
            <person name="King A."/>
            <person name="Laird G.K."/>
            <person name="Langford C."/>
            <person name="Lawlor S."/>
            <person name="Leongamornlert D.A."/>
            <person name="Leversha M."/>
            <person name="Lloyd C.R."/>
            <person name="Lloyd D.M."/>
            <person name="Loveland J.E."/>
            <person name="Lovell J."/>
            <person name="Martin S."/>
            <person name="Mashreghi-Mohammadi M."/>
            <person name="Maslen G.L."/>
            <person name="Matthews L."/>
            <person name="McCann O.T."/>
            <person name="McLaren S.J."/>
            <person name="McLay K."/>
            <person name="McMurray A."/>
            <person name="Moore M.J.F."/>
            <person name="Mullikin J.C."/>
            <person name="Niblett D."/>
            <person name="Nickerson T."/>
            <person name="Novik K.L."/>
            <person name="Oliver K."/>
            <person name="Overton-Larty E.K."/>
            <person name="Parker A."/>
            <person name="Patel R."/>
            <person name="Pearce A.V."/>
            <person name="Peck A.I."/>
            <person name="Phillimore B.J.C.T."/>
            <person name="Phillips S."/>
            <person name="Plumb R.W."/>
            <person name="Porter K.M."/>
            <person name="Ramsey Y."/>
            <person name="Ranby S.A."/>
            <person name="Rice C.M."/>
            <person name="Ross M.T."/>
            <person name="Searle S.M."/>
            <person name="Sehra H.K."/>
            <person name="Sheridan E."/>
            <person name="Skuce C.D."/>
            <person name="Smith S."/>
            <person name="Smith M."/>
            <person name="Spraggon L."/>
            <person name="Squares S.L."/>
            <person name="Steward C.A."/>
            <person name="Sycamore N."/>
            <person name="Tamlyn-Hall G."/>
            <person name="Tester J."/>
            <person name="Theaker A.J."/>
            <person name="Thomas D.W."/>
            <person name="Thorpe A."/>
            <person name="Tracey A."/>
            <person name="Tromans A."/>
            <person name="Tubby B."/>
            <person name="Wall M."/>
            <person name="Wallis J.M."/>
            <person name="West A.P."/>
            <person name="White S.S."/>
            <person name="Whitehead S.L."/>
            <person name="Whittaker H."/>
            <person name="Wild A."/>
            <person name="Willey D.J."/>
            <person name="Wilmer T.E."/>
            <person name="Wood J.M."/>
            <person name="Wray P.W."/>
            <person name="Wyatt J.C."/>
            <person name="Young L."/>
            <person name="Younger R.M."/>
            <person name="Bentley D.R."/>
            <person name="Coulson A."/>
            <person name="Durbin R.M."/>
            <person name="Hubbard T."/>
            <person name="Sulston J.E."/>
            <person name="Dunham I."/>
            <person name="Rogers J."/>
            <person name="Beck S."/>
        </authorList>
    </citation>
    <scope>NUCLEOTIDE SEQUENCE [LARGE SCALE GENOMIC DNA]</scope>
</reference>
<reference key="5">
    <citation type="journal article" date="2004" name="Genome Res.">
        <title>The status, quality, and expansion of the NIH full-length cDNA project: the Mammalian Gene Collection (MGC).</title>
        <authorList>
            <consortium name="The MGC Project Team"/>
        </authorList>
    </citation>
    <scope>NUCLEOTIDE SEQUENCE [LARGE SCALE MRNA]</scope>
    <scope>VARIANT GLY-21</scope>
    <source>
        <tissue>Lung</tissue>
        <tissue>Spleen</tissue>
    </source>
</reference>
<reference key="6">
    <citation type="journal article" date="2014" name="EMBO Mol. Med.">
        <title>Gain-of-function mutation in TASK-4 channels and severe cardiac conduction disorder.</title>
        <authorList>
            <person name="Friedrich C."/>
            <person name="Rinne S."/>
            <person name="Zumhagen S."/>
            <person name="Kiper A.K."/>
            <person name="Silbernagel N."/>
            <person name="Netter M.F."/>
            <person name="Stallmeyer B."/>
            <person name="Schulze-Bahr E."/>
            <person name="Decher N."/>
        </authorList>
    </citation>
    <scope>FUNCTION</scope>
    <scope>SUBCELLULAR LOCATION</scope>
    <scope>CHARACTERIZATION OF VARIANT ARG-88</scope>
    <scope>MUTAGENESIS OF GLY-88</scope>
</reference>
<reference key="7">
    <citation type="journal article" date="2016" name="Cell">
        <title>A Non-canonical Voltage-Sensing Mechanism Controls Gating in K2P K(+) Channels.</title>
        <authorList>
            <person name="Schewe M."/>
            <person name="Nematian-Ardestani E."/>
            <person name="Sun H."/>
            <person name="Musinszki M."/>
            <person name="Cordeiro S."/>
            <person name="Bucci G."/>
            <person name="de Groot B.L."/>
            <person name="Tucker S.J."/>
            <person name="Rapedius M."/>
            <person name="Baukrowitz T."/>
        </authorList>
    </citation>
    <scope>FUNCTION</scope>
    <scope>TRANSPORTER ACTIVITY</scope>
    <scope>REACTION MECHANISM</scope>
</reference>
<reference key="8">
    <citation type="journal article" date="2022" name="J. Biol. Chem.">
        <title>Alkaline-sensitive two-pore domain potassium channels form functional heteromers in pancreatic beta-cells.</title>
        <authorList>
            <person name="Khoubza L."/>
            <person name="Gilbert N."/>
            <person name="Kim E.J."/>
            <person name="Chatelain F.C."/>
            <person name="Feliciangeli S."/>
            <person name="Abelanet S."/>
            <person name="Kang D."/>
            <person name="Lesage F."/>
            <person name="Bichet D."/>
        </authorList>
    </citation>
    <scope>FUNCTION</scope>
    <scope>TRANSPORTER ACTIVITY</scope>
    <scope>ACTIVITY REGULATION</scope>
    <scope>BIOPHYSICOCHEMICAL PROPERTIES</scope>
    <scope>SUBUNIT</scope>
    <scope>INTERACTION WITH KCNK5 AND KCNK16</scope>
    <scope>TISSUE SPECIFICITY</scope>
</reference>
<proteinExistence type="evidence at protein level"/>
<sequence>MYRPRARAAPEGRVRGCAVPSTVLLLLAYLAYLALGTGVFWTLEGRAAQDSSRSFQRDKWELLQNFTCLDRPALDSLIRDVVQAYKNGASLLSNTTSMGRWELVGSFFFSVSTITTIGYGNLSPNTMAARLFCIFFALVGIPLNLVVLNRLGHLMQQGVNHWASRLGGTWQDPDKARWLAGSGALLSGLLLFLLLPPLLFSHMEGWSYTEGFYFAFITLSTVGFGDYVIGMNPSQRYPLWYKNMVSLWILFGMAWLALIIKLILSQLETPGRVCSCCHHSSKEDFKSQSWRQGPDREPESHSPQQGCYPEGPMGIIQHLEPSAHAAGCGKDS</sequence>
<name>KCNKH_HUMAN</name>
<evidence type="ECO:0000250" key="1">
    <source>
        <dbReference type="UniProtKB" id="P57789"/>
    </source>
</evidence>
<evidence type="ECO:0000250" key="2">
    <source>
        <dbReference type="UniProtKB" id="Q96T55"/>
    </source>
</evidence>
<evidence type="ECO:0000255" key="3"/>
<evidence type="ECO:0000256" key="4">
    <source>
        <dbReference type="SAM" id="MobiDB-lite"/>
    </source>
</evidence>
<evidence type="ECO:0000269" key="5">
    <source>
    </source>
</evidence>
<evidence type="ECO:0000269" key="6">
    <source>
    </source>
</evidence>
<evidence type="ECO:0000269" key="7">
    <source>
    </source>
</evidence>
<evidence type="ECO:0000269" key="8">
    <source>
    </source>
</evidence>
<evidence type="ECO:0000269" key="9">
    <source>
    </source>
</evidence>
<evidence type="ECO:0000269" key="10">
    <source>
    </source>
</evidence>
<evidence type="ECO:0000303" key="11">
    <source>
    </source>
</evidence>
<evidence type="ECO:0000305" key="12"/>
<evidence type="ECO:0000312" key="13">
    <source>
        <dbReference type="HGNC" id="HGNC:14465"/>
    </source>
</evidence>
<gene>
    <name evidence="13" type="primary">KCNK17</name>
    <name type="synonym">TALK2</name>
    <name type="synonym">TASK4</name>
    <name type="ORF">UNQ5816/PRO19634</name>
</gene>
<accession>Q96T54</accession>
<accession>E9PB46</accession>
<accession>Q5TCF4</accession>
<accession>Q8TAW4</accession>
<accession>Q9BXD1</accession>
<accession>Q9H592</accession>
<organism>
    <name type="scientific">Homo sapiens</name>
    <name type="common">Human</name>
    <dbReference type="NCBI Taxonomy" id="9606"/>
    <lineage>
        <taxon>Eukaryota</taxon>
        <taxon>Metazoa</taxon>
        <taxon>Chordata</taxon>
        <taxon>Craniata</taxon>
        <taxon>Vertebrata</taxon>
        <taxon>Euteleostomi</taxon>
        <taxon>Mammalia</taxon>
        <taxon>Eutheria</taxon>
        <taxon>Euarchontoglires</taxon>
        <taxon>Primates</taxon>
        <taxon>Haplorrhini</taxon>
        <taxon>Catarrhini</taxon>
        <taxon>Hominidae</taxon>
        <taxon>Homo</taxon>
    </lineage>
</organism>
<feature type="chain" id="PRO_0000101768" description="Potassium channel subfamily K member 17">
    <location>
        <begin position="1"/>
        <end position="332"/>
    </location>
</feature>
<feature type="topological domain" description="Cytoplasmic" evidence="3">
    <location>
        <begin position="1"/>
        <end position="20"/>
    </location>
</feature>
<feature type="transmembrane region" description="Helical" evidence="3">
    <location>
        <begin position="21"/>
        <end position="43"/>
    </location>
</feature>
<feature type="intramembrane region" description="Pore-forming; Name=Pore-forming 1" evidence="3">
    <location>
        <begin position="106"/>
        <end position="124"/>
    </location>
</feature>
<feature type="transmembrane region" description="Helical" evidence="3">
    <location>
        <begin position="128"/>
        <end position="148"/>
    </location>
</feature>
<feature type="topological domain" description="Cytoplasmic" evidence="3">
    <location>
        <begin position="149"/>
        <end position="179"/>
    </location>
</feature>
<feature type="transmembrane region" description="Helical" evidence="3">
    <location>
        <begin position="180"/>
        <end position="200"/>
    </location>
</feature>
<feature type="intramembrane region" description="Pore-forming; Name=Pore-forming 2" evidence="3">
    <location>
        <begin position="211"/>
        <end position="230"/>
    </location>
</feature>
<feature type="transmembrane region" description="Helical" evidence="3">
    <location>
        <begin position="244"/>
        <end position="264"/>
    </location>
</feature>
<feature type="topological domain" description="Cytoplasmic" evidence="3">
    <location>
        <begin position="265"/>
        <end position="332"/>
    </location>
</feature>
<feature type="region of interest" description="Selectivity filter 1" evidence="1">
    <location>
        <begin position="116"/>
        <end position="121"/>
    </location>
</feature>
<feature type="region of interest" description="Selectivity filter 2" evidence="1">
    <location>
        <begin position="221"/>
        <end position="226"/>
    </location>
</feature>
<feature type="region of interest" description="Disordered" evidence="4">
    <location>
        <begin position="287"/>
        <end position="312"/>
    </location>
</feature>
<feature type="binding site" evidence="1">
    <location>
        <position position="116"/>
    </location>
    <ligand>
        <name>K(+)</name>
        <dbReference type="ChEBI" id="CHEBI:29103"/>
        <label>1</label>
    </ligand>
</feature>
<feature type="binding site" evidence="1">
    <location>
        <position position="116"/>
    </location>
    <ligand>
        <name>K(+)</name>
        <dbReference type="ChEBI" id="CHEBI:29103"/>
        <label>4</label>
    </ligand>
</feature>
<feature type="binding site" evidence="1">
    <location>
        <position position="117"/>
    </location>
    <ligand>
        <name>K(+)</name>
        <dbReference type="ChEBI" id="CHEBI:29103"/>
        <label>1</label>
    </ligand>
</feature>
<feature type="binding site" evidence="1">
    <location>
        <position position="117"/>
    </location>
    <ligand>
        <name>K(+)</name>
        <dbReference type="ChEBI" id="CHEBI:29103"/>
        <label>2</label>
    </ligand>
</feature>
<feature type="binding site" evidence="1">
    <location>
        <position position="118"/>
    </location>
    <ligand>
        <name>K(+)</name>
        <dbReference type="ChEBI" id="CHEBI:29103"/>
        <label>2</label>
    </ligand>
</feature>
<feature type="binding site" evidence="1">
    <location>
        <position position="118"/>
    </location>
    <ligand>
        <name>K(+)</name>
        <dbReference type="ChEBI" id="CHEBI:29103"/>
        <label>3</label>
    </ligand>
</feature>
<feature type="binding site" evidence="1">
    <location>
        <position position="119"/>
    </location>
    <ligand>
        <name>K(+)</name>
        <dbReference type="ChEBI" id="CHEBI:29103"/>
        <label>3</label>
    </ligand>
</feature>
<feature type="binding site" evidence="1">
    <location>
        <position position="221"/>
    </location>
    <ligand>
        <name>K(+)</name>
        <dbReference type="ChEBI" id="CHEBI:29103"/>
        <label>1</label>
    </ligand>
</feature>
<feature type="binding site" evidence="1">
    <location>
        <position position="221"/>
    </location>
    <ligand>
        <name>K(+)</name>
        <dbReference type="ChEBI" id="CHEBI:29103"/>
        <label>4</label>
    </ligand>
</feature>
<feature type="binding site" evidence="1">
    <location>
        <position position="222"/>
    </location>
    <ligand>
        <name>K(+)</name>
        <dbReference type="ChEBI" id="CHEBI:29103"/>
        <label>1</label>
    </ligand>
</feature>
<feature type="binding site" evidence="1">
    <location>
        <position position="222"/>
    </location>
    <ligand>
        <name>K(+)</name>
        <dbReference type="ChEBI" id="CHEBI:29103"/>
        <label>2</label>
    </ligand>
</feature>
<feature type="binding site" evidence="1">
    <location>
        <position position="223"/>
    </location>
    <ligand>
        <name>K(+)</name>
        <dbReference type="ChEBI" id="CHEBI:29103"/>
        <label>2</label>
    </ligand>
</feature>
<feature type="binding site" evidence="1">
    <location>
        <position position="223"/>
    </location>
    <ligand>
        <name>K(+)</name>
        <dbReference type="ChEBI" id="CHEBI:29103"/>
        <label>3</label>
    </ligand>
</feature>
<feature type="binding site" evidence="1">
    <location>
        <position position="224"/>
    </location>
    <ligand>
        <name>K(+)</name>
        <dbReference type="ChEBI" id="CHEBI:29103"/>
        <label>3</label>
    </ligand>
</feature>
<feature type="glycosylation site" description="N-linked (GlcNAc...) asparagine" evidence="3">
    <location>
        <position position="65"/>
    </location>
</feature>
<feature type="glycosylation site" description="N-linked (GlcNAc...) asparagine" evidence="3">
    <location>
        <position position="94"/>
    </location>
</feature>
<feature type="disulfide bond" description="Interchain (with C-68)" evidence="1">
    <location>
        <position position="68"/>
    </location>
</feature>
<feature type="splice variant" id="VSP_047354" description="In isoform 2." evidence="12">
    <original>GMNPSQRYPLWYKNMVSLWILFGMAWLALIIKLILSQLETPGRVCSCCHHSSKEDFKSQSWRQGPDREPESHSPQQGCYPEGPMGIIQHLEPSAHAAGCGKDS</original>
    <variation>ASCLISDTRKPNRDWQTLERTSKSSGGLLKYRFLAGHGGSHL</variation>
    <location>
        <begin position="230"/>
        <end position="332"/>
    </location>
</feature>
<feature type="sequence variant" id="VAR_032362" description="In dbSNP:rs10947804." evidence="5 7">
    <original>S</original>
    <variation>G</variation>
    <location>
        <position position="21"/>
    </location>
</feature>
<feature type="sequence variant" id="VAR_089734" description="Found in a patient with progressive and severe cardiac conduction disorder combined with idiopathic ventricular fibrillation; results in 3-fold increased current conductance when compared to wild-type; leads to more pronounced afterhyperpolarization and markedly slowed beating frequency and upstroke velocity when expressed in spontaneously beating sinoatrial node-like cardiomyocytes; no effect on channel subcellular localization; acts as a dominant active on wild-type subunit; dbSNP:rs141016843." evidence="8">
    <original>G</original>
    <variation>R</variation>
    <location>
        <position position="88"/>
    </location>
</feature>
<feature type="sequence variant" id="VAR_032363" description="In dbSNP:rs35677794.">
    <original>M</original>
    <variation>L</variation>
    <location>
        <position position="253"/>
    </location>
</feature>
<feature type="sequence variant" id="VAR_024683" description="In dbSNP:rs2758910.">
    <original>R</original>
    <variation>Q</variation>
    <location>
        <position position="296"/>
    </location>
</feature>
<feature type="mutagenesis site" description="Slightly increased current conductance when compared to wild-type." evidence="8">
    <original>G</original>
    <variation>A</variation>
    <location>
        <position position="88"/>
    </location>
</feature>
<feature type="mutagenesis site" description="3.6-fold increased current conductance when compared to wild-type." evidence="8">
    <original>G</original>
    <variation>E</variation>
    <location>
        <position position="88"/>
    </location>
</feature>
<feature type="mutagenesis site" description="7.3-fold increased current conductance when compared to wild-type." evidence="8">
    <original>G</original>
    <variation>K</variation>
    <location>
        <position position="88"/>
    </location>
</feature>
<protein>
    <recommendedName>
        <fullName>Potassium channel subfamily K member 17</fullName>
    </recommendedName>
    <alternativeName>
        <fullName>2P domain potassium channel Talk-2</fullName>
    </alternativeName>
    <alternativeName>
        <fullName>Acid-sensitive potassium channel protein TASK-4</fullName>
    </alternativeName>
    <alternativeName>
        <fullName>TWIK-related acid-sensitive K(+) channel 4</fullName>
    </alternativeName>
    <alternativeName>
        <fullName>TWIK-related alkaline pH-activated K(+) channel 2</fullName>
        <shortName evidence="11">TALK-2</shortName>
    </alternativeName>
</protein>
<comment type="function">
    <text evidence="2 5 6 8 9 10">K(+) channel that conducts voltage-dependent outward rectifying currents upon membrane depolarization. Voltage sensing is coupled to K(+) electrochemical gradient in an 'ion flux gating' mode where outward but not inward ion flow opens the gate (PubMed:11248242, PubMed:11263999, PubMed:26919430, PubMed:36063992). Homo- and heterodimerizes to form functional channels with distinct regulatory and gating properties (PubMed:36063992). Present in the cardiac conduction system where it may regulate action potential duration and beating frequency of cardiac myocytes (PubMed:24972929). Permeable to other monovalent cations such as Rb(+) and Cs(+) (By similarity) (PubMed:26919430).</text>
</comment>
<comment type="catalytic activity">
    <reaction evidence="5 6 9 10">
        <text>K(+)(in) = K(+)(out)</text>
        <dbReference type="Rhea" id="RHEA:29463"/>
        <dbReference type="ChEBI" id="CHEBI:29103"/>
    </reaction>
</comment>
<comment type="catalytic activity">
    <reaction evidence="2">
        <text>Rb(+)(in) = Rb(+)(out)</text>
        <dbReference type="Rhea" id="RHEA:78547"/>
        <dbReference type="ChEBI" id="CHEBI:49847"/>
    </reaction>
</comment>
<comment type="catalytic activity">
    <reaction evidence="9">
        <text>Cs(+)(in) = Cs(+)(out)</text>
        <dbReference type="Rhea" id="RHEA:78555"/>
        <dbReference type="ChEBI" id="CHEBI:49547"/>
    </reaction>
</comment>
<comment type="activity regulation">
    <text evidence="5 6 10">Inhibited by Ba(2+), quinidine, chloroform and halothane. Activated at alkaline pH. Activated by quinine and isoflurane.</text>
</comment>
<comment type="biophysicochemical properties">
    <phDependence>
        <text evidence="5 10">The homodimer is mainly inactive at pH range 6.0-7.5 and gated open at pH range 7.5-10.5. The heterodimer with KCNK5 or KCNK16 is gated open at physiological pH range 7-8 and increases current conductance at alkaline pH without apparent saturation.</text>
    </phDependence>
</comment>
<comment type="subunit">
    <text evidence="10">Homodimer; disulfide-linked. Heterodimer with KCNK5 and KCNK16.</text>
</comment>
<comment type="subcellular location">
    <subcellularLocation>
        <location evidence="8">Cell membrane</location>
        <topology evidence="3">Multi-pass membrane protein</topology>
    </subcellularLocation>
</comment>
<comment type="alternative products">
    <event type="alternative splicing"/>
    <isoform>
        <id>Q96T54-3</id>
        <name>1</name>
        <sequence type="displayed"/>
    </isoform>
    <isoform>
        <id>Q96T54-4</id>
        <name>2</name>
        <sequence type="described" ref="VSP_047354"/>
    </isoform>
</comment>
<comment type="tissue specificity">
    <text evidence="6 10">Widely expressed. Highly expressed in aorta and coronary artery. Expressed in pancreas, in both endocrine (alpha, beta, gamma, delta, and epsilon) and exocrine (acinar and ductal) cells.</text>
</comment>
<comment type="domain">
    <text evidence="1">The pore-forming domains 1 and 2 assemble to form a single pore in which M2 and M4 transmembrane helices line the central cavity and M1 and M3 face the lipid bilayer. The transmembrane helices are bridged by the selectivity filters 1 and 2 carrying a signature sequence TxTTxGYGD that coordinate the permeant ions. Up to four ions can simultaneously occupy the selectivity filter and at least two elementary charges must translocate across the filter to convert it into the open conformation.</text>
</comment>
<comment type="similarity">
    <text evidence="12">Belongs to the two pore domain potassium channel (TC 1.A.1.8) family.</text>
</comment>
<comment type="sequence caution" evidence="12">
    <conflict type="frameshift">
        <sequence resource="EMBL-CDS" id="AAK28551"/>
    </conflict>
</comment>